<comment type="function">
    <text evidence="1">Together with LptD, is involved in the assembly of lipopolysaccharide (LPS) at the surface of the outer membrane. Required for the proper assembly of LptD. Binds LPS and may serve as the LPS recognition site at the outer membrane.</text>
</comment>
<comment type="subunit">
    <text evidence="1">Component of the lipopolysaccharide transport and assembly complex. Interacts with LptD.</text>
</comment>
<comment type="subcellular location">
    <subcellularLocation>
        <location evidence="1">Cell outer membrane</location>
        <topology evidence="1">Lipid-anchor</topology>
    </subcellularLocation>
</comment>
<comment type="similarity">
    <text evidence="1">Belongs to the LptE lipoprotein family.</text>
</comment>
<gene>
    <name evidence="1" type="primary">lptE</name>
    <name type="synonym">rlpB</name>
    <name type="ordered locus">PC1_1186</name>
</gene>
<reference key="1">
    <citation type="submission" date="2009-07" db="EMBL/GenBank/DDBJ databases">
        <title>Complete sequence of Pectobacterium carotovorum subsp. carotovorum PC1.</title>
        <authorList>
            <consortium name="US DOE Joint Genome Institute"/>
            <person name="Lucas S."/>
            <person name="Copeland A."/>
            <person name="Lapidus A."/>
            <person name="Glavina del Rio T."/>
            <person name="Tice H."/>
            <person name="Bruce D."/>
            <person name="Goodwin L."/>
            <person name="Pitluck S."/>
            <person name="Munk A.C."/>
            <person name="Brettin T."/>
            <person name="Detter J.C."/>
            <person name="Han C."/>
            <person name="Tapia R."/>
            <person name="Larimer F."/>
            <person name="Land M."/>
            <person name="Hauser L."/>
            <person name="Kyrpides N."/>
            <person name="Mikhailova N."/>
            <person name="Balakrishnan V."/>
            <person name="Glasner J."/>
            <person name="Perna N.T."/>
        </authorList>
    </citation>
    <scope>NUCLEOTIDE SEQUENCE [LARGE SCALE GENOMIC DNA]</scope>
    <source>
        <strain>PC1</strain>
    </source>
</reference>
<keyword id="KW-0998">Cell outer membrane</keyword>
<keyword id="KW-0449">Lipoprotein</keyword>
<keyword id="KW-0472">Membrane</keyword>
<keyword id="KW-0564">Palmitate</keyword>
<keyword id="KW-0732">Signal</keyword>
<name>LPTE_PECCP</name>
<evidence type="ECO:0000255" key="1">
    <source>
        <dbReference type="HAMAP-Rule" id="MF_01186"/>
    </source>
</evidence>
<feature type="signal peptide" evidence="1">
    <location>
        <begin position="1"/>
        <end position="19"/>
    </location>
</feature>
<feature type="chain" id="PRO_1000213779" description="LPS-assembly lipoprotein LptE">
    <location>
        <begin position="20"/>
        <end position="184"/>
    </location>
</feature>
<feature type="lipid moiety-binding region" description="N-palmitoyl cysteine" evidence="1">
    <location>
        <position position="20"/>
    </location>
</feature>
<feature type="lipid moiety-binding region" description="S-diacylglycerol cysteine" evidence="1">
    <location>
        <position position="20"/>
    </location>
</feature>
<protein>
    <recommendedName>
        <fullName evidence="1">LPS-assembly lipoprotein LptE</fullName>
    </recommendedName>
</protein>
<sequence>MRHRLFTLLLGLAVLITAGCGFHLRGTTQVPAQLQTLVLDSSDPYGPLTRAVREQLRLSDVKIVDDATRQDIPSLRVLGSSETRDTVSIFQDGKTAEYQMVLTLQAQVLMPGEDIYPLSVTVFRTFFDNPLAALAKDAEQDIVRQEMREQAAQQLVRKLLTVNGSQEVKNRQQSTHSTAAATRS</sequence>
<dbReference type="EMBL" id="CP001657">
    <property type="protein sequence ID" value="ACT12234.1"/>
    <property type="molecule type" value="Genomic_DNA"/>
</dbReference>
<dbReference type="RefSeq" id="WP_015839468.1">
    <property type="nucleotide sequence ID" value="NC_012917.1"/>
</dbReference>
<dbReference type="SMR" id="C6DBW7"/>
<dbReference type="STRING" id="561230.PC1_1186"/>
<dbReference type="KEGG" id="pct:PC1_1186"/>
<dbReference type="eggNOG" id="COG2980">
    <property type="taxonomic scope" value="Bacteria"/>
</dbReference>
<dbReference type="HOGENOM" id="CLU_103309_1_1_6"/>
<dbReference type="OrthoDB" id="5801564at2"/>
<dbReference type="Proteomes" id="UP000002736">
    <property type="component" value="Chromosome"/>
</dbReference>
<dbReference type="GO" id="GO:0009279">
    <property type="term" value="C:cell outer membrane"/>
    <property type="evidence" value="ECO:0007669"/>
    <property type="project" value="UniProtKB-SubCell"/>
</dbReference>
<dbReference type="GO" id="GO:1990351">
    <property type="term" value="C:transporter complex"/>
    <property type="evidence" value="ECO:0007669"/>
    <property type="project" value="TreeGrafter"/>
</dbReference>
<dbReference type="GO" id="GO:0001530">
    <property type="term" value="F:lipopolysaccharide binding"/>
    <property type="evidence" value="ECO:0007669"/>
    <property type="project" value="TreeGrafter"/>
</dbReference>
<dbReference type="GO" id="GO:0043165">
    <property type="term" value="P:Gram-negative-bacterium-type cell outer membrane assembly"/>
    <property type="evidence" value="ECO:0007669"/>
    <property type="project" value="UniProtKB-UniRule"/>
</dbReference>
<dbReference type="GO" id="GO:0015920">
    <property type="term" value="P:lipopolysaccharide transport"/>
    <property type="evidence" value="ECO:0007669"/>
    <property type="project" value="TreeGrafter"/>
</dbReference>
<dbReference type="Gene3D" id="3.30.160.150">
    <property type="entry name" value="Lipoprotein like domain"/>
    <property type="match status" value="1"/>
</dbReference>
<dbReference type="HAMAP" id="MF_01186">
    <property type="entry name" value="LPS_assembly_LptE"/>
    <property type="match status" value="1"/>
</dbReference>
<dbReference type="InterPro" id="IPR007485">
    <property type="entry name" value="LPS_assembly_LptE"/>
</dbReference>
<dbReference type="NCBIfam" id="NF008062">
    <property type="entry name" value="PRK10796.1"/>
    <property type="match status" value="1"/>
</dbReference>
<dbReference type="PANTHER" id="PTHR38098">
    <property type="entry name" value="LPS-ASSEMBLY LIPOPROTEIN LPTE"/>
    <property type="match status" value="1"/>
</dbReference>
<dbReference type="PANTHER" id="PTHR38098:SF1">
    <property type="entry name" value="LPS-ASSEMBLY LIPOPROTEIN LPTE"/>
    <property type="match status" value="1"/>
</dbReference>
<dbReference type="Pfam" id="PF04390">
    <property type="entry name" value="LptE"/>
    <property type="match status" value="1"/>
</dbReference>
<dbReference type="PROSITE" id="PS51257">
    <property type="entry name" value="PROKAR_LIPOPROTEIN"/>
    <property type="match status" value="1"/>
</dbReference>
<accession>C6DBW7</accession>
<proteinExistence type="inferred from homology"/>
<organism>
    <name type="scientific">Pectobacterium carotovorum subsp. carotovorum (strain PC1)</name>
    <dbReference type="NCBI Taxonomy" id="561230"/>
    <lineage>
        <taxon>Bacteria</taxon>
        <taxon>Pseudomonadati</taxon>
        <taxon>Pseudomonadota</taxon>
        <taxon>Gammaproteobacteria</taxon>
        <taxon>Enterobacterales</taxon>
        <taxon>Pectobacteriaceae</taxon>
        <taxon>Pectobacterium</taxon>
    </lineage>
</organism>